<accession>Q1Q8P6</accession>
<reference key="1">
    <citation type="submission" date="2006-03" db="EMBL/GenBank/DDBJ databases">
        <title>Complete sequence of chromosome of Psychrobacter cryohalolentis K5.</title>
        <authorList>
            <consortium name="US DOE Joint Genome Institute"/>
            <person name="Copeland A."/>
            <person name="Lucas S."/>
            <person name="Lapidus A."/>
            <person name="Barry K."/>
            <person name="Detter J.C."/>
            <person name="Glavina T."/>
            <person name="Hammon N."/>
            <person name="Israni S."/>
            <person name="Dalin E."/>
            <person name="Tice H."/>
            <person name="Pitluck S."/>
            <person name="Brettin T."/>
            <person name="Bruce D."/>
            <person name="Han C."/>
            <person name="Tapia R."/>
            <person name="Sims D.R."/>
            <person name="Gilna P."/>
            <person name="Schmutz J."/>
            <person name="Larimer F."/>
            <person name="Land M."/>
            <person name="Hauser L."/>
            <person name="Kyrpides N."/>
            <person name="Kim E."/>
            <person name="Richardson P."/>
        </authorList>
    </citation>
    <scope>NUCLEOTIDE SEQUENCE [LARGE SCALE GENOMIC DNA]</scope>
    <source>
        <strain>ATCC BAA-1226 / DSM 17306 / VKM B-2378 / K5</strain>
    </source>
</reference>
<comment type="function">
    <text evidence="1">Binds directly to 23S rRNA. The L1 stalk is quite mobile in the ribosome, and is involved in E site tRNA release.</text>
</comment>
<comment type="function">
    <text evidence="1">Protein L1 is also a translational repressor protein, it controls the translation of the L11 operon by binding to its mRNA.</text>
</comment>
<comment type="subunit">
    <text evidence="1">Part of the 50S ribosomal subunit.</text>
</comment>
<comment type="similarity">
    <text evidence="1">Belongs to the universal ribosomal protein uL1 family.</text>
</comment>
<sequence length="233" mass="24685">MSKLTKRQKEINSRIEHEKQYTIEEAVQILNDLPALKFKESIDIAVNLGVDPRKSDQVVRGATNLPAGTGKTKRVAVFAQGAAAEAAKEAGADIVGFEDLAESIKAGNMDFDVVIAAPDAMRVVGQLGTILGPRGLMPNPKVGTVTPNVAEAVLNAKAGQAQYRVDKAGIIHTTIGQVGFTAEQVIQNAEALISDLRRAKPATSKGTFIKKITLSSTMGPGLSIDPVPYRTAK</sequence>
<protein>
    <recommendedName>
        <fullName evidence="1">Large ribosomal subunit protein uL1</fullName>
    </recommendedName>
    <alternativeName>
        <fullName evidence="2">50S ribosomal protein L1</fullName>
    </alternativeName>
</protein>
<gene>
    <name evidence="1" type="primary">rplA</name>
    <name type="ordered locus">Pcryo_2180</name>
</gene>
<organism>
    <name type="scientific">Psychrobacter cryohalolentis (strain ATCC BAA-1226 / DSM 17306 / VKM B-2378 / K5)</name>
    <dbReference type="NCBI Taxonomy" id="335284"/>
    <lineage>
        <taxon>Bacteria</taxon>
        <taxon>Pseudomonadati</taxon>
        <taxon>Pseudomonadota</taxon>
        <taxon>Gammaproteobacteria</taxon>
        <taxon>Moraxellales</taxon>
        <taxon>Moraxellaceae</taxon>
        <taxon>Psychrobacter</taxon>
    </lineage>
</organism>
<keyword id="KW-0678">Repressor</keyword>
<keyword id="KW-0687">Ribonucleoprotein</keyword>
<keyword id="KW-0689">Ribosomal protein</keyword>
<keyword id="KW-0694">RNA-binding</keyword>
<keyword id="KW-0699">rRNA-binding</keyword>
<keyword id="KW-0810">Translation regulation</keyword>
<keyword id="KW-0820">tRNA-binding</keyword>
<feature type="chain" id="PRO_0000308079" description="Large ribosomal subunit protein uL1">
    <location>
        <begin position="1"/>
        <end position="233"/>
    </location>
</feature>
<name>RL1_PSYCK</name>
<proteinExistence type="inferred from homology"/>
<evidence type="ECO:0000255" key="1">
    <source>
        <dbReference type="HAMAP-Rule" id="MF_01318"/>
    </source>
</evidence>
<evidence type="ECO:0000305" key="2"/>
<dbReference type="EMBL" id="CP000323">
    <property type="protein sequence ID" value="ABE75957.1"/>
    <property type="molecule type" value="Genomic_DNA"/>
</dbReference>
<dbReference type="RefSeq" id="WP_011514493.1">
    <property type="nucleotide sequence ID" value="NC_007969.1"/>
</dbReference>
<dbReference type="SMR" id="Q1Q8P6"/>
<dbReference type="STRING" id="335284.Pcryo_2180"/>
<dbReference type="KEGG" id="pcr:Pcryo_2180"/>
<dbReference type="eggNOG" id="COG0081">
    <property type="taxonomic scope" value="Bacteria"/>
</dbReference>
<dbReference type="HOGENOM" id="CLU_062853_0_0_6"/>
<dbReference type="Proteomes" id="UP000002425">
    <property type="component" value="Chromosome"/>
</dbReference>
<dbReference type="GO" id="GO:0022625">
    <property type="term" value="C:cytosolic large ribosomal subunit"/>
    <property type="evidence" value="ECO:0007669"/>
    <property type="project" value="TreeGrafter"/>
</dbReference>
<dbReference type="GO" id="GO:0019843">
    <property type="term" value="F:rRNA binding"/>
    <property type="evidence" value="ECO:0007669"/>
    <property type="project" value="UniProtKB-UniRule"/>
</dbReference>
<dbReference type="GO" id="GO:0003735">
    <property type="term" value="F:structural constituent of ribosome"/>
    <property type="evidence" value="ECO:0007669"/>
    <property type="project" value="InterPro"/>
</dbReference>
<dbReference type="GO" id="GO:0000049">
    <property type="term" value="F:tRNA binding"/>
    <property type="evidence" value="ECO:0007669"/>
    <property type="project" value="UniProtKB-KW"/>
</dbReference>
<dbReference type="GO" id="GO:0006417">
    <property type="term" value="P:regulation of translation"/>
    <property type="evidence" value="ECO:0007669"/>
    <property type="project" value="UniProtKB-KW"/>
</dbReference>
<dbReference type="GO" id="GO:0006412">
    <property type="term" value="P:translation"/>
    <property type="evidence" value="ECO:0007669"/>
    <property type="project" value="UniProtKB-UniRule"/>
</dbReference>
<dbReference type="CDD" id="cd00403">
    <property type="entry name" value="Ribosomal_L1"/>
    <property type="match status" value="1"/>
</dbReference>
<dbReference type="FunFam" id="3.40.50.790:FF:000001">
    <property type="entry name" value="50S ribosomal protein L1"/>
    <property type="match status" value="1"/>
</dbReference>
<dbReference type="Gene3D" id="3.30.190.20">
    <property type="match status" value="1"/>
</dbReference>
<dbReference type="Gene3D" id="3.40.50.790">
    <property type="match status" value="1"/>
</dbReference>
<dbReference type="HAMAP" id="MF_01318_B">
    <property type="entry name" value="Ribosomal_uL1_B"/>
    <property type="match status" value="1"/>
</dbReference>
<dbReference type="InterPro" id="IPR005878">
    <property type="entry name" value="Ribosom_uL1_bac-type"/>
</dbReference>
<dbReference type="InterPro" id="IPR002143">
    <property type="entry name" value="Ribosomal_uL1"/>
</dbReference>
<dbReference type="InterPro" id="IPR023674">
    <property type="entry name" value="Ribosomal_uL1-like"/>
</dbReference>
<dbReference type="InterPro" id="IPR028364">
    <property type="entry name" value="Ribosomal_uL1/biogenesis"/>
</dbReference>
<dbReference type="InterPro" id="IPR016095">
    <property type="entry name" value="Ribosomal_uL1_3-a/b-sand"/>
</dbReference>
<dbReference type="InterPro" id="IPR023673">
    <property type="entry name" value="Ribosomal_uL1_CS"/>
</dbReference>
<dbReference type="NCBIfam" id="TIGR01169">
    <property type="entry name" value="rplA_bact"/>
    <property type="match status" value="1"/>
</dbReference>
<dbReference type="PANTHER" id="PTHR36427">
    <property type="entry name" value="54S RIBOSOMAL PROTEIN L1, MITOCHONDRIAL"/>
    <property type="match status" value="1"/>
</dbReference>
<dbReference type="PANTHER" id="PTHR36427:SF3">
    <property type="entry name" value="LARGE RIBOSOMAL SUBUNIT PROTEIN UL1M"/>
    <property type="match status" value="1"/>
</dbReference>
<dbReference type="Pfam" id="PF00687">
    <property type="entry name" value="Ribosomal_L1"/>
    <property type="match status" value="1"/>
</dbReference>
<dbReference type="PIRSF" id="PIRSF002155">
    <property type="entry name" value="Ribosomal_L1"/>
    <property type="match status" value="1"/>
</dbReference>
<dbReference type="SUPFAM" id="SSF56808">
    <property type="entry name" value="Ribosomal protein L1"/>
    <property type="match status" value="1"/>
</dbReference>
<dbReference type="PROSITE" id="PS01199">
    <property type="entry name" value="RIBOSOMAL_L1"/>
    <property type="match status" value="1"/>
</dbReference>